<accession>P57992</accession>
<keyword id="KW-0028">Amino-acid biosynthesis</keyword>
<keyword id="KW-0055">Arginine biosynthesis</keyword>
<keyword id="KW-0963">Cytoplasm</keyword>
<keyword id="KW-0238">DNA-binding</keyword>
<keyword id="KW-1185">Reference proteome</keyword>
<keyword id="KW-0678">Repressor</keyword>
<keyword id="KW-0804">Transcription</keyword>
<keyword id="KW-0805">Transcription regulation</keyword>
<comment type="function">
    <text evidence="1">Regulates arginine biosynthesis genes.</text>
</comment>
<comment type="pathway">
    <text>Amino-acid biosynthesis; L-arginine biosynthesis [regulation].</text>
</comment>
<comment type="subcellular location">
    <subcellularLocation>
        <location evidence="1">Cytoplasm</location>
    </subcellularLocation>
</comment>
<comment type="similarity">
    <text evidence="2">Belongs to the ArgR family.</text>
</comment>
<feature type="chain" id="PRO_0000205102" description="Arginine repressor">
    <location>
        <begin position="1"/>
        <end position="167"/>
    </location>
</feature>
<organism>
    <name type="scientific">Mycobacterium leprae (strain TN)</name>
    <dbReference type="NCBI Taxonomy" id="272631"/>
    <lineage>
        <taxon>Bacteria</taxon>
        <taxon>Bacillati</taxon>
        <taxon>Actinomycetota</taxon>
        <taxon>Actinomycetes</taxon>
        <taxon>Mycobacteriales</taxon>
        <taxon>Mycobacteriaceae</taxon>
        <taxon>Mycobacterium</taxon>
    </lineage>
</organism>
<protein>
    <recommendedName>
        <fullName>Arginine repressor</fullName>
    </recommendedName>
</protein>
<evidence type="ECO:0000250" key="1"/>
<evidence type="ECO:0000305" key="2"/>
<proteinExistence type="inferred from homology"/>
<name>ARGR_MYCLE</name>
<gene>
    <name type="primary">argR</name>
    <name type="ordered locus">ML1411</name>
</gene>
<sequence>MTHGASKTTPETTRAGRQARIVAILSSTSVRSQSELATLLADDGIDVTQATLSRDLEELGAVKLRGADGGVGVYVVPEDGSPVRGVSGGTARLSRLLSELLVSADSSANLAVLRTPPGAADYLASAIDRAALPYVVGTIAGDDTVFVAAREPMTGSELATVLESLNR</sequence>
<reference key="1">
    <citation type="journal article" date="2001" name="Nature">
        <title>Massive gene decay in the leprosy bacillus.</title>
        <authorList>
            <person name="Cole S.T."/>
            <person name="Eiglmeier K."/>
            <person name="Parkhill J."/>
            <person name="James K.D."/>
            <person name="Thomson N.R."/>
            <person name="Wheeler P.R."/>
            <person name="Honore N."/>
            <person name="Garnier T."/>
            <person name="Churcher C.M."/>
            <person name="Harris D.E."/>
            <person name="Mungall K.L."/>
            <person name="Basham D."/>
            <person name="Brown D."/>
            <person name="Chillingworth T."/>
            <person name="Connor R."/>
            <person name="Davies R.M."/>
            <person name="Devlin K."/>
            <person name="Duthoy S."/>
            <person name="Feltwell T."/>
            <person name="Fraser A."/>
            <person name="Hamlin N."/>
            <person name="Holroyd S."/>
            <person name="Hornsby T."/>
            <person name="Jagels K."/>
            <person name="Lacroix C."/>
            <person name="Maclean J."/>
            <person name="Moule S."/>
            <person name="Murphy L.D."/>
            <person name="Oliver K."/>
            <person name="Quail M.A."/>
            <person name="Rajandream M.A."/>
            <person name="Rutherford K.M."/>
            <person name="Rutter S."/>
            <person name="Seeger K."/>
            <person name="Simon S."/>
            <person name="Simmonds M."/>
            <person name="Skelton J."/>
            <person name="Squares R."/>
            <person name="Squares S."/>
            <person name="Stevens K."/>
            <person name="Taylor K."/>
            <person name="Whitehead S."/>
            <person name="Woodward J.R."/>
            <person name="Barrell B.G."/>
        </authorList>
    </citation>
    <scope>NUCLEOTIDE SEQUENCE [LARGE SCALE GENOMIC DNA]</scope>
    <source>
        <strain>TN</strain>
    </source>
</reference>
<dbReference type="EMBL" id="AL583922">
    <property type="protein sequence ID" value="CAC30362.1"/>
    <property type="molecule type" value="Genomic_DNA"/>
</dbReference>
<dbReference type="PIR" id="E87085">
    <property type="entry name" value="E87085"/>
</dbReference>
<dbReference type="RefSeq" id="NP_302004.1">
    <property type="nucleotide sequence ID" value="NC_002677.1"/>
</dbReference>
<dbReference type="RefSeq" id="WP_010908325.1">
    <property type="nucleotide sequence ID" value="NC_002677.1"/>
</dbReference>
<dbReference type="SMR" id="P57992"/>
<dbReference type="STRING" id="272631.gene:17575250"/>
<dbReference type="KEGG" id="mle:ML1411"/>
<dbReference type="PATRIC" id="fig|272631.5.peg.2616"/>
<dbReference type="Leproma" id="ML1411"/>
<dbReference type="eggNOG" id="COG1438">
    <property type="taxonomic scope" value="Bacteria"/>
</dbReference>
<dbReference type="HOGENOM" id="CLU_097103_1_1_11"/>
<dbReference type="OrthoDB" id="7060358at2"/>
<dbReference type="UniPathway" id="UPA00068"/>
<dbReference type="Proteomes" id="UP000000806">
    <property type="component" value="Chromosome"/>
</dbReference>
<dbReference type="GO" id="GO:0005737">
    <property type="term" value="C:cytoplasm"/>
    <property type="evidence" value="ECO:0007669"/>
    <property type="project" value="UniProtKB-SubCell"/>
</dbReference>
<dbReference type="GO" id="GO:0034618">
    <property type="term" value="F:arginine binding"/>
    <property type="evidence" value="ECO:0007669"/>
    <property type="project" value="InterPro"/>
</dbReference>
<dbReference type="GO" id="GO:0003677">
    <property type="term" value="F:DNA binding"/>
    <property type="evidence" value="ECO:0007669"/>
    <property type="project" value="UniProtKB-KW"/>
</dbReference>
<dbReference type="GO" id="GO:0003700">
    <property type="term" value="F:DNA-binding transcription factor activity"/>
    <property type="evidence" value="ECO:0007669"/>
    <property type="project" value="UniProtKB-UniRule"/>
</dbReference>
<dbReference type="GO" id="GO:0006526">
    <property type="term" value="P:L-arginine biosynthetic process"/>
    <property type="evidence" value="ECO:0007669"/>
    <property type="project" value="UniProtKB-UniPathway"/>
</dbReference>
<dbReference type="GO" id="GO:0051259">
    <property type="term" value="P:protein complex oligomerization"/>
    <property type="evidence" value="ECO:0007669"/>
    <property type="project" value="InterPro"/>
</dbReference>
<dbReference type="GO" id="GO:1900079">
    <property type="term" value="P:regulation of arginine biosynthetic process"/>
    <property type="evidence" value="ECO:0007669"/>
    <property type="project" value="UniProtKB-UniRule"/>
</dbReference>
<dbReference type="FunFam" id="1.10.10.10:FF:000667">
    <property type="entry name" value="Arginine repressor"/>
    <property type="match status" value="1"/>
</dbReference>
<dbReference type="Gene3D" id="3.30.1360.40">
    <property type="match status" value="1"/>
</dbReference>
<dbReference type="Gene3D" id="1.10.10.10">
    <property type="entry name" value="Winged helix-like DNA-binding domain superfamily/Winged helix DNA-binding domain"/>
    <property type="match status" value="1"/>
</dbReference>
<dbReference type="HAMAP" id="MF_00173">
    <property type="entry name" value="Arg_repressor"/>
    <property type="match status" value="1"/>
</dbReference>
<dbReference type="InterPro" id="IPR001669">
    <property type="entry name" value="Arg_repress"/>
</dbReference>
<dbReference type="InterPro" id="IPR020899">
    <property type="entry name" value="Arg_repress_C"/>
</dbReference>
<dbReference type="InterPro" id="IPR036251">
    <property type="entry name" value="Arg_repress_C_sf"/>
</dbReference>
<dbReference type="InterPro" id="IPR020900">
    <property type="entry name" value="Arg_repress_DNA-bd"/>
</dbReference>
<dbReference type="InterPro" id="IPR036388">
    <property type="entry name" value="WH-like_DNA-bd_sf"/>
</dbReference>
<dbReference type="InterPro" id="IPR036390">
    <property type="entry name" value="WH_DNA-bd_sf"/>
</dbReference>
<dbReference type="NCBIfam" id="TIGR01529">
    <property type="entry name" value="argR_whole"/>
    <property type="match status" value="1"/>
</dbReference>
<dbReference type="NCBIfam" id="NF002880">
    <property type="entry name" value="PRK03341.1"/>
    <property type="match status" value="1"/>
</dbReference>
<dbReference type="PANTHER" id="PTHR34471">
    <property type="entry name" value="ARGININE REPRESSOR"/>
    <property type="match status" value="1"/>
</dbReference>
<dbReference type="PANTHER" id="PTHR34471:SF1">
    <property type="entry name" value="ARGININE REPRESSOR"/>
    <property type="match status" value="1"/>
</dbReference>
<dbReference type="Pfam" id="PF01316">
    <property type="entry name" value="Arg_repressor"/>
    <property type="match status" value="1"/>
</dbReference>
<dbReference type="Pfam" id="PF02863">
    <property type="entry name" value="Arg_repressor_C"/>
    <property type="match status" value="1"/>
</dbReference>
<dbReference type="PRINTS" id="PR01467">
    <property type="entry name" value="ARGREPRESSOR"/>
</dbReference>
<dbReference type="SUPFAM" id="SSF55252">
    <property type="entry name" value="C-terminal domain of arginine repressor"/>
    <property type="match status" value="1"/>
</dbReference>
<dbReference type="SUPFAM" id="SSF46785">
    <property type="entry name" value="Winged helix' DNA-binding domain"/>
    <property type="match status" value="1"/>
</dbReference>